<organism>
    <name type="scientific">Legionella pneumophila (strain Corby)</name>
    <dbReference type="NCBI Taxonomy" id="400673"/>
    <lineage>
        <taxon>Bacteria</taxon>
        <taxon>Pseudomonadati</taxon>
        <taxon>Pseudomonadota</taxon>
        <taxon>Gammaproteobacteria</taxon>
        <taxon>Legionellales</taxon>
        <taxon>Legionellaceae</taxon>
        <taxon>Legionella</taxon>
    </lineage>
</organism>
<name>APAH_LEGPC</name>
<sequence length="276" mass="31363">MPDYAIGDVQGCYDPLQRLLELIDFNEKEDCLWFVGDLVNRGPDSLAVLRFIYSLPVKPKITLGNHDLHLLGLLFGGQPWKGHDDTLEEVMLADDGEELGHWLRKQSLLCRSSELNIVMCHAGIAPLWDLSKAVGLANELEAVLSGDSYHEFFAQMYGNKPDIWSDDLVGLDRLRVITNYFTRMRYCDAHGRLDLGYKGTLSKAPNHLYPWFEVPCRKEIEMDIVFGHWAALMGRSSHPRIHAIDTGCLWGGQLTALRLQDRQRFSVPGYGVSRFE</sequence>
<proteinExistence type="inferred from homology"/>
<feature type="chain" id="PRO_1000012068" description="Bis(5'-nucleosyl)-tetraphosphatase, symmetrical">
    <location>
        <begin position="1"/>
        <end position="276"/>
    </location>
</feature>
<reference key="1">
    <citation type="submission" date="2006-11" db="EMBL/GenBank/DDBJ databases">
        <title>Identification and characterization of a new conjugation/ type IVA secretion system (trb/tra) of L. pneumophila Corby localized on a mobile genomic island.</title>
        <authorList>
            <person name="Gloeckner G."/>
            <person name="Albert-Weissenberger C."/>
            <person name="Weinmann E."/>
            <person name="Jacobi S."/>
            <person name="Schunder E."/>
            <person name="Steinert M."/>
            <person name="Buchrieser C."/>
            <person name="Hacker J."/>
            <person name="Heuner K."/>
        </authorList>
    </citation>
    <scope>NUCLEOTIDE SEQUENCE [LARGE SCALE GENOMIC DNA]</scope>
    <source>
        <strain>Corby</strain>
    </source>
</reference>
<keyword id="KW-0378">Hydrolase</keyword>
<evidence type="ECO:0000255" key="1">
    <source>
        <dbReference type="HAMAP-Rule" id="MF_00199"/>
    </source>
</evidence>
<dbReference type="EC" id="3.6.1.41" evidence="1"/>
<dbReference type="EMBL" id="CP000675">
    <property type="protein sequence ID" value="ABQ57118.1"/>
    <property type="molecule type" value="Genomic_DNA"/>
</dbReference>
<dbReference type="RefSeq" id="WP_011947820.1">
    <property type="nucleotide sequence ID" value="NC_009494.2"/>
</dbReference>
<dbReference type="SMR" id="A5IIB8"/>
<dbReference type="KEGG" id="lpc:LPC_3231"/>
<dbReference type="HOGENOM" id="CLU_056184_2_0_6"/>
<dbReference type="GO" id="GO:0008803">
    <property type="term" value="F:bis(5'-nucleosyl)-tetraphosphatase (symmetrical) activity"/>
    <property type="evidence" value="ECO:0007669"/>
    <property type="project" value="UniProtKB-UniRule"/>
</dbReference>
<dbReference type="CDD" id="cd07422">
    <property type="entry name" value="MPP_ApaH"/>
    <property type="match status" value="1"/>
</dbReference>
<dbReference type="Gene3D" id="3.60.21.10">
    <property type="match status" value="1"/>
</dbReference>
<dbReference type="HAMAP" id="MF_00199">
    <property type="entry name" value="ApaH"/>
    <property type="match status" value="1"/>
</dbReference>
<dbReference type="InterPro" id="IPR004617">
    <property type="entry name" value="ApaH"/>
</dbReference>
<dbReference type="InterPro" id="IPR004843">
    <property type="entry name" value="Calcineurin-like_PHP_ApaH"/>
</dbReference>
<dbReference type="InterPro" id="IPR029052">
    <property type="entry name" value="Metallo-depent_PP-like"/>
</dbReference>
<dbReference type="NCBIfam" id="TIGR00668">
    <property type="entry name" value="apaH"/>
    <property type="match status" value="1"/>
</dbReference>
<dbReference type="NCBIfam" id="NF001204">
    <property type="entry name" value="PRK00166.1"/>
    <property type="match status" value="1"/>
</dbReference>
<dbReference type="PANTHER" id="PTHR40942">
    <property type="match status" value="1"/>
</dbReference>
<dbReference type="PANTHER" id="PTHR40942:SF4">
    <property type="entry name" value="CYTOCHROME C5"/>
    <property type="match status" value="1"/>
</dbReference>
<dbReference type="Pfam" id="PF00149">
    <property type="entry name" value="Metallophos"/>
    <property type="match status" value="1"/>
</dbReference>
<dbReference type="PIRSF" id="PIRSF000903">
    <property type="entry name" value="B5n-ttraPtase_sm"/>
    <property type="match status" value="1"/>
</dbReference>
<dbReference type="SUPFAM" id="SSF56300">
    <property type="entry name" value="Metallo-dependent phosphatases"/>
    <property type="match status" value="1"/>
</dbReference>
<protein>
    <recommendedName>
        <fullName evidence="1">Bis(5'-nucleosyl)-tetraphosphatase, symmetrical</fullName>
        <ecNumber evidence="1">3.6.1.41</ecNumber>
    </recommendedName>
    <alternativeName>
        <fullName evidence="1">Ap4A hydrolase</fullName>
    </alternativeName>
    <alternativeName>
        <fullName evidence="1">Diadenosine 5',5'''-P1,P4-tetraphosphate pyrophosphohydrolase</fullName>
    </alternativeName>
    <alternativeName>
        <fullName evidence="1">Diadenosine tetraphosphatase</fullName>
    </alternativeName>
</protein>
<comment type="function">
    <text evidence="1">Hydrolyzes diadenosine 5',5'''-P1,P4-tetraphosphate to yield ADP.</text>
</comment>
<comment type="catalytic activity">
    <reaction evidence="1">
        <text>P(1),P(4)-bis(5'-adenosyl) tetraphosphate + H2O = 2 ADP + 2 H(+)</text>
        <dbReference type="Rhea" id="RHEA:24252"/>
        <dbReference type="ChEBI" id="CHEBI:15377"/>
        <dbReference type="ChEBI" id="CHEBI:15378"/>
        <dbReference type="ChEBI" id="CHEBI:58141"/>
        <dbReference type="ChEBI" id="CHEBI:456216"/>
        <dbReference type="EC" id="3.6.1.41"/>
    </reaction>
</comment>
<comment type="similarity">
    <text evidence="1">Belongs to the Ap4A hydrolase family.</text>
</comment>
<accession>A5IIB8</accession>
<gene>
    <name evidence="1" type="primary">apaH</name>
    <name type="ordered locus">LPC_3231</name>
</gene>